<gene>
    <name type="primary">MRS2-I</name>
    <name type="ORF">OsI_13458</name>
</gene>
<feature type="chain" id="PRO_0000394282" description="Magnesium transporter MRS2-I">
    <location>
        <begin position="1"/>
        <end position="381"/>
    </location>
</feature>
<feature type="transmembrane region" description="Helical" evidence="2">
    <location>
        <begin position="316"/>
        <end position="336"/>
    </location>
</feature>
<feature type="transmembrane region" description="Helical" evidence="2">
    <location>
        <begin position="353"/>
        <end position="373"/>
    </location>
</feature>
<feature type="short sequence motif" description="Required for magnesium transport activity">
    <location>
        <begin position="336"/>
        <end position="338"/>
    </location>
</feature>
<dbReference type="EMBL" id="CM000128">
    <property type="protein sequence ID" value="EEC76157.1"/>
    <property type="molecule type" value="Genomic_DNA"/>
</dbReference>
<dbReference type="SMR" id="B8AJT9"/>
<dbReference type="EnsemblPlants" id="BGIOSGA009838-TA">
    <property type="protein sequence ID" value="BGIOSGA009838-PA"/>
    <property type="gene ID" value="BGIOSGA009838"/>
</dbReference>
<dbReference type="EnsemblPlants" id="OsGoSa_03g0033840.01">
    <property type="protein sequence ID" value="OsGoSa_03g0033840.01"/>
    <property type="gene ID" value="OsGoSa_03g0033840"/>
</dbReference>
<dbReference type="EnsemblPlants" id="OsIR64_03g0033670.01">
    <property type="protein sequence ID" value="OsIR64_03g0033670.01"/>
    <property type="gene ID" value="OsIR64_03g0033670"/>
</dbReference>
<dbReference type="EnsemblPlants" id="OsKYG_03g0034110.01">
    <property type="protein sequence ID" value="OsKYG_03g0034110.01"/>
    <property type="gene ID" value="OsKYG_03g0034110"/>
</dbReference>
<dbReference type="EnsemblPlants" id="OsLaMu_03g0033880.01">
    <property type="protein sequence ID" value="OsLaMu_03g0033880.01"/>
    <property type="gene ID" value="OsLaMu_03g0033880"/>
</dbReference>
<dbReference type="EnsemblPlants" id="OsLima_03g0034120.01">
    <property type="protein sequence ID" value="OsLima_03g0034120.01"/>
    <property type="gene ID" value="OsLima_03g0034120"/>
</dbReference>
<dbReference type="EnsemblPlants" id="OsMH63_03G033920_01">
    <property type="protein sequence ID" value="OsMH63_03G033920_01"/>
    <property type="gene ID" value="OsMH63_03G033920"/>
</dbReference>
<dbReference type="EnsemblPlants" id="OsPr106_03g0033880.01">
    <property type="protein sequence ID" value="OsPr106_03g0033880.01"/>
    <property type="gene ID" value="OsPr106_03g0033880"/>
</dbReference>
<dbReference type="EnsemblPlants" id="OsZS97_03G033850_01">
    <property type="protein sequence ID" value="OsZS97_03G033850_01"/>
    <property type="gene ID" value="OsZS97_03G033850"/>
</dbReference>
<dbReference type="Gramene" id="BGIOSGA009838-TA">
    <property type="protein sequence ID" value="BGIOSGA009838-PA"/>
    <property type="gene ID" value="BGIOSGA009838"/>
</dbReference>
<dbReference type="Gramene" id="OsGoSa_03g0033840.01">
    <property type="protein sequence ID" value="OsGoSa_03g0033840.01"/>
    <property type="gene ID" value="OsGoSa_03g0033840"/>
</dbReference>
<dbReference type="Gramene" id="OsIR64_03g0033670.01">
    <property type="protein sequence ID" value="OsIR64_03g0033670.01"/>
    <property type="gene ID" value="OsIR64_03g0033670"/>
</dbReference>
<dbReference type="Gramene" id="OsKYG_03g0034110.01">
    <property type="protein sequence ID" value="OsKYG_03g0034110.01"/>
    <property type="gene ID" value="OsKYG_03g0034110"/>
</dbReference>
<dbReference type="Gramene" id="OsLaMu_03g0033880.01">
    <property type="protein sequence ID" value="OsLaMu_03g0033880.01"/>
    <property type="gene ID" value="OsLaMu_03g0033880"/>
</dbReference>
<dbReference type="Gramene" id="OsLima_03g0034120.01">
    <property type="protein sequence ID" value="OsLima_03g0034120.01"/>
    <property type="gene ID" value="OsLima_03g0034120"/>
</dbReference>
<dbReference type="Gramene" id="OsMH63_03G033920_01">
    <property type="protein sequence ID" value="OsMH63_03G033920_01"/>
    <property type="gene ID" value="OsMH63_03G033920"/>
</dbReference>
<dbReference type="Gramene" id="OsPr106_03g0033880.01">
    <property type="protein sequence ID" value="OsPr106_03g0033880.01"/>
    <property type="gene ID" value="OsPr106_03g0033880"/>
</dbReference>
<dbReference type="Gramene" id="OsZS97_03G033850_01">
    <property type="protein sequence ID" value="OsZS97_03G033850_01"/>
    <property type="gene ID" value="OsZS97_03G033850"/>
</dbReference>
<dbReference type="HOGENOM" id="CLU_034694_1_0_1"/>
<dbReference type="OMA" id="FKQKGVM"/>
<dbReference type="OrthoDB" id="10251508at2759"/>
<dbReference type="Proteomes" id="UP000007015">
    <property type="component" value="Chromosome 3"/>
</dbReference>
<dbReference type="GO" id="GO:0016020">
    <property type="term" value="C:membrane"/>
    <property type="evidence" value="ECO:0007669"/>
    <property type="project" value="UniProtKB-SubCell"/>
</dbReference>
<dbReference type="GO" id="GO:0015095">
    <property type="term" value="F:magnesium ion transmembrane transporter activity"/>
    <property type="evidence" value="ECO:0007669"/>
    <property type="project" value="TreeGrafter"/>
</dbReference>
<dbReference type="CDD" id="cd12823">
    <property type="entry name" value="Mrs2_Mfm1p-like"/>
    <property type="match status" value="1"/>
</dbReference>
<dbReference type="FunFam" id="2.40.128.330:FF:000001">
    <property type="entry name" value="Magnesium transporter MRS2-1"/>
    <property type="match status" value="1"/>
</dbReference>
<dbReference type="Gene3D" id="2.40.128.330">
    <property type="match status" value="1"/>
</dbReference>
<dbReference type="Gene3D" id="1.20.58.340">
    <property type="entry name" value="Magnesium transport protein CorA, transmembrane region"/>
    <property type="match status" value="1"/>
</dbReference>
<dbReference type="InterPro" id="IPR045863">
    <property type="entry name" value="CorA_TM1_TM2"/>
</dbReference>
<dbReference type="InterPro" id="IPR002523">
    <property type="entry name" value="MgTranspt_CorA/ZnTranspt_ZntB"/>
</dbReference>
<dbReference type="InterPro" id="IPR039204">
    <property type="entry name" value="MRS2-like"/>
</dbReference>
<dbReference type="PANTHER" id="PTHR13890:SF31">
    <property type="entry name" value="MAGNESIUM TRANSPORTER MRS2-2-RELATED"/>
    <property type="match status" value="1"/>
</dbReference>
<dbReference type="PANTHER" id="PTHR13890">
    <property type="entry name" value="RNA SPLICING PROTEIN MRS2, MITOCHONDRIAL"/>
    <property type="match status" value="1"/>
</dbReference>
<dbReference type="Pfam" id="PF01544">
    <property type="entry name" value="CorA"/>
    <property type="match status" value="1"/>
</dbReference>
<dbReference type="Pfam" id="PF22099">
    <property type="entry name" value="MRS2-like"/>
    <property type="match status" value="1"/>
</dbReference>
<dbReference type="SUPFAM" id="SSF144083">
    <property type="entry name" value="Magnesium transport protein CorA, transmembrane region"/>
    <property type="match status" value="1"/>
</dbReference>
<proteinExistence type="inferred from homology"/>
<evidence type="ECO:0000250" key="1"/>
<evidence type="ECO:0000255" key="2"/>
<evidence type="ECO:0000305" key="3"/>
<keyword id="KW-0406">Ion transport</keyword>
<keyword id="KW-0460">Magnesium</keyword>
<keyword id="KW-0472">Membrane</keyword>
<keyword id="KW-1185">Reference proteome</keyword>
<keyword id="KW-0812">Transmembrane</keyword>
<keyword id="KW-1133">Transmembrane helix</keyword>
<keyword id="KW-0813">Transport</keyword>
<accession>B8AJT9</accession>
<comment type="function">
    <text evidence="1">Magnesium transporter that may mediate the influx of magnesium.</text>
</comment>
<comment type="subcellular location">
    <subcellularLocation>
        <location evidence="1">Membrane</location>
        <topology evidence="1">Multi-pass membrane protein</topology>
    </subcellularLocation>
</comment>
<comment type="similarity">
    <text evidence="3">Belongs to the CorA metal ion transporter (MIT) (TC 1.A.35.5) family.</text>
</comment>
<protein>
    <recommendedName>
        <fullName>Magnesium transporter MRS2-I</fullName>
    </recommendedName>
</protein>
<sequence>MAAAVVVAGEAAAAAGAGGKKRGASRSWILFDAAGEERVLDADKYAIMHRVDINARDLRILDPLLSYPSTILGRERAIVLNLEHIKAIITAEEVLLRDPLDDNVIPVVEELRRRLAPSSATQHDVEGAEEDESPFEFRALEVTLEAICSFLGARTTELESAAYPALDELTSKISSRNLDRVRKLKSGMTRLNARVQKVRDELEQLLDDDDDMADLYLSRKLAGAASPVSGSGGPNWFPASPTIGSKISRASRASAPTIHGNENDVEELEMLLEAYFMQIDGTLNKLTTLREYIDDTEDYINIQLDNHRNQLIQLELFLSSGTVCLSLYSLVAGIFGMNIPYTWNDNHGYVFKWVVLVSGLFCAFMFVSIVAYARHKGLVGS</sequence>
<organism>
    <name type="scientific">Oryza sativa subsp. indica</name>
    <name type="common">Rice</name>
    <dbReference type="NCBI Taxonomy" id="39946"/>
    <lineage>
        <taxon>Eukaryota</taxon>
        <taxon>Viridiplantae</taxon>
        <taxon>Streptophyta</taxon>
        <taxon>Embryophyta</taxon>
        <taxon>Tracheophyta</taxon>
        <taxon>Spermatophyta</taxon>
        <taxon>Magnoliopsida</taxon>
        <taxon>Liliopsida</taxon>
        <taxon>Poales</taxon>
        <taxon>Poaceae</taxon>
        <taxon>BOP clade</taxon>
        <taxon>Oryzoideae</taxon>
        <taxon>Oryzeae</taxon>
        <taxon>Oryzinae</taxon>
        <taxon>Oryza</taxon>
        <taxon>Oryza sativa</taxon>
    </lineage>
</organism>
<reference key="1">
    <citation type="journal article" date="2005" name="PLoS Biol.">
        <title>The genomes of Oryza sativa: a history of duplications.</title>
        <authorList>
            <person name="Yu J."/>
            <person name="Wang J."/>
            <person name="Lin W."/>
            <person name="Li S."/>
            <person name="Li H."/>
            <person name="Zhou J."/>
            <person name="Ni P."/>
            <person name="Dong W."/>
            <person name="Hu S."/>
            <person name="Zeng C."/>
            <person name="Zhang J."/>
            <person name="Zhang Y."/>
            <person name="Li R."/>
            <person name="Xu Z."/>
            <person name="Li S."/>
            <person name="Li X."/>
            <person name="Zheng H."/>
            <person name="Cong L."/>
            <person name="Lin L."/>
            <person name="Yin J."/>
            <person name="Geng J."/>
            <person name="Li G."/>
            <person name="Shi J."/>
            <person name="Liu J."/>
            <person name="Lv H."/>
            <person name="Li J."/>
            <person name="Wang J."/>
            <person name="Deng Y."/>
            <person name="Ran L."/>
            <person name="Shi X."/>
            <person name="Wang X."/>
            <person name="Wu Q."/>
            <person name="Li C."/>
            <person name="Ren X."/>
            <person name="Wang J."/>
            <person name="Wang X."/>
            <person name="Li D."/>
            <person name="Liu D."/>
            <person name="Zhang X."/>
            <person name="Ji Z."/>
            <person name="Zhao W."/>
            <person name="Sun Y."/>
            <person name="Zhang Z."/>
            <person name="Bao J."/>
            <person name="Han Y."/>
            <person name="Dong L."/>
            <person name="Ji J."/>
            <person name="Chen P."/>
            <person name="Wu S."/>
            <person name="Liu J."/>
            <person name="Xiao Y."/>
            <person name="Bu D."/>
            <person name="Tan J."/>
            <person name="Yang L."/>
            <person name="Ye C."/>
            <person name="Zhang J."/>
            <person name="Xu J."/>
            <person name="Zhou Y."/>
            <person name="Yu Y."/>
            <person name="Zhang B."/>
            <person name="Zhuang S."/>
            <person name="Wei H."/>
            <person name="Liu B."/>
            <person name="Lei M."/>
            <person name="Yu H."/>
            <person name="Li Y."/>
            <person name="Xu H."/>
            <person name="Wei S."/>
            <person name="He X."/>
            <person name="Fang L."/>
            <person name="Zhang Z."/>
            <person name="Zhang Y."/>
            <person name="Huang X."/>
            <person name="Su Z."/>
            <person name="Tong W."/>
            <person name="Li J."/>
            <person name="Tong Z."/>
            <person name="Li S."/>
            <person name="Ye J."/>
            <person name="Wang L."/>
            <person name="Fang L."/>
            <person name="Lei T."/>
            <person name="Chen C.-S."/>
            <person name="Chen H.-C."/>
            <person name="Xu Z."/>
            <person name="Li H."/>
            <person name="Huang H."/>
            <person name="Zhang F."/>
            <person name="Xu H."/>
            <person name="Li N."/>
            <person name="Zhao C."/>
            <person name="Li S."/>
            <person name="Dong L."/>
            <person name="Huang Y."/>
            <person name="Li L."/>
            <person name="Xi Y."/>
            <person name="Qi Q."/>
            <person name="Li W."/>
            <person name="Zhang B."/>
            <person name="Hu W."/>
            <person name="Zhang Y."/>
            <person name="Tian X."/>
            <person name="Jiao Y."/>
            <person name="Liang X."/>
            <person name="Jin J."/>
            <person name="Gao L."/>
            <person name="Zheng W."/>
            <person name="Hao B."/>
            <person name="Liu S.-M."/>
            <person name="Wang W."/>
            <person name="Yuan L."/>
            <person name="Cao M."/>
            <person name="McDermott J."/>
            <person name="Samudrala R."/>
            <person name="Wang J."/>
            <person name="Wong G.K.-S."/>
            <person name="Yang H."/>
        </authorList>
    </citation>
    <scope>NUCLEOTIDE SEQUENCE [LARGE SCALE GENOMIC DNA]</scope>
    <source>
        <strain>cv. 93-11</strain>
    </source>
</reference>
<name>MRS2I_ORYSI</name>